<gene>
    <name type="primary">PRKRA</name>
</gene>
<accession>Q2HJ92</accession>
<protein>
    <recommendedName>
        <fullName>Interferon-inducible double-stranded RNA-dependent protein kinase activator A</fullName>
    </recommendedName>
    <alternativeName>
        <fullName>Protein activator of the interferon-induced protein kinase</fullName>
    </alternativeName>
    <alternativeName>
        <fullName>Protein kinase, interferon-inducible double-stranded RNA-dependent activator</fullName>
    </alternativeName>
</protein>
<evidence type="ECO:0000250" key="1"/>
<evidence type="ECO:0000250" key="2">
    <source>
        <dbReference type="UniProtKB" id="O75569"/>
    </source>
</evidence>
<evidence type="ECO:0000255" key="3">
    <source>
        <dbReference type="PROSITE-ProRule" id="PRU00266"/>
    </source>
</evidence>
<evidence type="ECO:0000256" key="4">
    <source>
        <dbReference type="SAM" id="MobiDB-lite"/>
    </source>
</evidence>
<evidence type="ECO:0000305" key="5"/>
<name>PRKRA_BOVIN</name>
<sequence length="313" mass="34413">MSQSRHRAAAPPMEREDSGTFSLGKMITAKPGKTPIQVLHEYGMKTKNIPVYECERSDVQIHVPTFTFRVTVGDITCTGEGTSKKLAKHRAAEAAINILKANASICFAVPDPLMPDPSKQPKNQLNPIGSLQELAIHHGWRLPEYTLSQEGGPAHKREYTTICRLESFMETGKGASKKQAKRNAAEKFLAKFSNISPENHISLTNMVGHSLGCTWHSLRNSPGEKINLLKRSLLSIPNTDYIQLLSEIAKEQGFNITYLDIEELSANGQYQCLAELSTSPITVCHGSGISCSSAQSDAAHNALQYLKIIAERK</sequence>
<dbReference type="EMBL" id="BC113246">
    <property type="protein sequence ID" value="AAI13247.1"/>
    <property type="molecule type" value="mRNA"/>
</dbReference>
<dbReference type="RefSeq" id="NP_001039335.1">
    <property type="nucleotide sequence ID" value="NM_001045870.1"/>
</dbReference>
<dbReference type="SMR" id="Q2HJ92"/>
<dbReference type="FunCoup" id="Q2HJ92">
    <property type="interactions" value="2019"/>
</dbReference>
<dbReference type="STRING" id="9913.ENSBTAP00000001451"/>
<dbReference type="PaxDb" id="9913-ENSBTAP00000001451"/>
<dbReference type="Ensembl" id="ENSBTAT00000001451.4">
    <property type="protein sequence ID" value="ENSBTAP00000001451.3"/>
    <property type="gene ID" value="ENSBTAG00000001096.5"/>
</dbReference>
<dbReference type="GeneID" id="282875"/>
<dbReference type="KEGG" id="bta:282875"/>
<dbReference type="CTD" id="8575"/>
<dbReference type="VEuPathDB" id="HostDB:ENSBTAG00000001096"/>
<dbReference type="VGNC" id="VGNC:33343">
    <property type="gene designation" value="PRKRA"/>
</dbReference>
<dbReference type="eggNOG" id="KOG3732">
    <property type="taxonomic scope" value="Eukaryota"/>
</dbReference>
<dbReference type="GeneTree" id="ENSGT00940000157618"/>
<dbReference type="HOGENOM" id="CLU_048292_0_0_1"/>
<dbReference type="InParanoid" id="Q2HJ92"/>
<dbReference type="OMA" id="PEYEFEK"/>
<dbReference type="OrthoDB" id="10056847at2759"/>
<dbReference type="TreeFam" id="TF315953"/>
<dbReference type="Reactome" id="R-BTA-203927">
    <property type="pathway name" value="MicroRNA (miRNA) biogenesis"/>
</dbReference>
<dbReference type="Reactome" id="R-BTA-426486">
    <property type="pathway name" value="Small interfering RNA (siRNA) biogenesis"/>
</dbReference>
<dbReference type="Reactome" id="R-BTA-9833482">
    <property type="pathway name" value="PKR-mediated signaling"/>
</dbReference>
<dbReference type="Proteomes" id="UP000009136">
    <property type="component" value="Chromosome 2"/>
</dbReference>
<dbReference type="Bgee" id="ENSBTAG00000001096">
    <property type="expression patterns" value="Expressed in oocyte and 106 other cell types or tissues"/>
</dbReference>
<dbReference type="GO" id="GO:0005737">
    <property type="term" value="C:cytoplasm"/>
    <property type="evidence" value="ECO:0000250"/>
    <property type="project" value="AgBase"/>
</dbReference>
<dbReference type="GO" id="GO:0005622">
    <property type="term" value="C:intracellular anatomical structure"/>
    <property type="evidence" value="ECO:0000250"/>
    <property type="project" value="AgBase"/>
</dbReference>
<dbReference type="GO" id="GO:0005634">
    <property type="term" value="C:nucleus"/>
    <property type="evidence" value="ECO:0000318"/>
    <property type="project" value="GO_Central"/>
</dbReference>
<dbReference type="GO" id="GO:0048471">
    <property type="term" value="C:perinuclear region of cytoplasm"/>
    <property type="evidence" value="ECO:0007669"/>
    <property type="project" value="UniProtKB-SubCell"/>
</dbReference>
<dbReference type="GO" id="GO:0016442">
    <property type="term" value="C:RISC complex"/>
    <property type="evidence" value="ECO:0000318"/>
    <property type="project" value="GO_Central"/>
</dbReference>
<dbReference type="GO" id="GO:0070578">
    <property type="term" value="C:RISC-loading complex"/>
    <property type="evidence" value="ECO:0000318"/>
    <property type="project" value="GO_Central"/>
</dbReference>
<dbReference type="GO" id="GO:0003725">
    <property type="term" value="F:double-stranded RNA binding"/>
    <property type="evidence" value="ECO:0000318"/>
    <property type="project" value="GO_Central"/>
</dbReference>
<dbReference type="GO" id="GO:0035197">
    <property type="term" value="F:siRNA binding"/>
    <property type="evidence" value="ECO:0000318"/>
    <property type="project" value="GO_Central"/>
</dbReference>
<dbReference type="GO" id="GO:0042474">
    <property type="term" value="P:middle ear morphogenesis"/>
    <property type="evidence" value="ECO:0000250"/>
    <property type="project" value="AgBase"/>
</dbReference>
<dbReference type="GO" id="GO:0042473">
    <property type="term" value="P:outer ear morphogenesis"/>
    <property type="evidence" value="ECO:0000250"/>
    <property type="project" value="AgBase"/>
</dbReference>
<dbReference type="GO" id="GO:0006468">
    <property type="term" value="P:protein phosphorylation"/>
    <property type="evidence" value="ECO:0000250"/>
    <property type="project" value="AgBase"/>
</dbReference>
<dbReference type="GO" id="GO:0070920">
    <property type="term" value="P:regulation of regulatory ncRNA processing"/>
    <property type="evidence" value="ECO:0000318"/>
    <property type="project" value="GO_Central"/>
</dbReference>
<dbReference type="GO" id="GO:0030422">
    <property type="term" value="P:siRNA processing"/>
    <property type="evidence" value="ECO:0000250"/>
    <property type="project" value="UniProtKB"/>
</dbReference>
<dbReference type="GO" id="GO:0048705">
    <property type="term" value="P:skeletal system morphogenesis"/>
    <property type="evidence" value="ECO:0000250"/>
    <property type="project" value="AgBase"/>
</dbReference>
<dbReference type="CDD" id="cd19889">
    <property type="entry name" value="DSRM_PRKRA_rpt1"/>
    <property type="match status" value="1"/>
</dbReference>
<dbReference type="CDD" id="cd19891">
    <property type="entry name" value="DSRM_PRKRA_rpt2"/>
    <property type="match status" value="1"/>
</dbReference>
<dbReference type="CDD" id="cd19892">
    <property type="entry name" value="DSRM_PRKRA_rpt3"/>
    <property type="match status" value="1"/>
</dbReference>
<dbReference type="FunFam" id="3.30.160.20:FF:000005">
    <property type="entry name" value="Putative double-stranded RNA-specific adenosine deaminase"/>
    <property type="match status" value="1"/>
</dbReference>
<dbReference type="FunFam" id="3.30.160.20:FF:000019">
    <property type="entry name" value="RISC-loading complex subunit TARBP2"/>
    <property type="match status" value="1"/>
</dbReference>
<dbReference type="FunFam" id="3.30.160.20:FF:000018">
    <property type="entry name" value="RISC-loading complex subunit TARBP2 isoform X3"/>
    <property type="match status" value="1"/>
</dbReference>
<dbReference type="Gene3D" id="3.30.160.20">
    <property type="match status" value="3"/>
</dbReference>
<dbReference type="InterPro" id="IPR014720">
    <property type="entry name" value="dsRBD_dom"/>
</dbReference>
<dbReference type="InterPro" id="IPR044465">
    <property type="entry name" value="PRKRA_DSRM_1"/>
</dbReference>
<dbReference type="InterPro" id="IPR044466">
    <property type="entry name" value="PRKRA_DSRM_2"/>
</dbReference>
<dbReference type="InterPro" id="IPR044467">
    <property type="entry name" value="PRKRA_DSRM_3"/>
</dbReference>
<dbReference type="InterPro" id="IPR051247">
    <property type="entry name" value="RLC_Component"/>
</dbReference>
<dbReference type="PANTHER" id="PTHR46205:SF2">
    <property type="entry name" value="INTERFERON-INDUCIBLE DOUBLE-STRANDED RNA-DEPENDENT PROTEIN KINASE ACTIVATOR A"/>
    <property type="match status" value="1"/>
</dbReference>
<dbReference type="PANTHER" id="PTHR46205">
    <property type="entry name" value="LOQUACIOUS, ISOFORM B"/>
    <property type="match status" value="1"/>
</dbReference>
<dbReference type="Pfam" id="PF00035">
    <property type="entry name" value="dsrm"/>
    <property type="match status" value="2"/>
</dbReference>
<dbReference type="SMART" id="SM00358">
    <property type="entry name" value="DSRM"/>
    <property type="match status" value="3"/>
</dbReference>
<dbReference type="SUPFAM" id="SSF54768">
    <property type="entry name" value="dsRNA-binding domain-like"/>
    <property type="match status" value="3"/>
</dbReference>
<dbReference type="PROSITE" id="PS50137">
    <property type="entry name" value="DS_RBD"/>
    <property type="match status" value="3"/>
</dbReference>
<organism>
    <name type="scientific">Bos taurus</name>
    <name type="common">Bovine</name>
    <dbReference type="NCBI Taxonomy" id="9913"/>
    <lineage>
        <taxon>Eukaryota</taxon>
        <taxon>Metazoa</taxon>
        <taxon>Chordata</taxon>
        <taxon>Craniata</taxon>
        <taxon>Vertebrata</taxon>
        <taxon>Euteleostomi</taxon>
        <taxon>Mammalia</taxon>
        <taxon>Eutheria</taxon>
        <taxon>Laurasiatheria</taxon>
        <taxon>Artiodactyla</taxon>
        <taxon>Ruminantia</taxon>
        <taxon>Pecora</taxon>
        <taxon>Bovidae</taxon>
        <taxon>Bovinae</taxon>
        <taxon>Bos</taxon>
    </lineage>
</organism>
<keyword id="KW-0963">Cytoplasm</keyword>
<keyword id="KW-0597">Phosphoprotein</keyword>
<keyword id="KW-1185">Reference proteome</keyword>
<keyword id="KW-0677">Repeat</keyword>
<keyword id="KW-0694">RNA-binding</keyword>
<keyword id="KW-0943">RNA-mediated gene silencing</keyword>
<reference key="1">
    <citation type="submission" date="2006-02" db="EMBL/GenBank/DDBJ databases">
        <authorList>
            <consortium name="NIH - Mammalian Gene Collection (MGC) project"/>
        </authorList>
    </citation>
    <scope>NUCLEOTIDE SEQUENCE [LARGE SCALE MRNA]</scope>
    <source>
        <strain>Hereford</strain>
        <tissue>Uterus</tissue>
    </source>
</reference>
<comment type="function">
    <text evidence="1">Activates EIF2AK2/PKR in the absence of double-stranded RNA (dsRNA), leading to phosphorylation of EIF2S1/EFI2-alpha and inhibition of translation and induction of apoptosis. Required for siRNA production by DICER1 and for subsequent siRNA-mediated post-transcriptional gene silencing. Does not seem to be required for processing of pre-miRNA to miRNA by DICER1. Promotes UBC9-p53/TP53 association and sumoylation and phosphorylation of p53/TP53 at 'Lys-386' at 'Ser-392' respectively and enhances its activity in a EIF2AK2/PKR-dependent manner (By similarity).</text>
</comment>
<comment type="subunit">
    <text evidence="1">Homodimer. Interacts with EIF2AK2/PKR through its DRBM domains. Interacts with DICER1, AGO2 and TARBP2. Also able to interact with dsRNA (By similarity). Interacts with UBC9 (By similarity). Forms a complex with UBC9 and p53/TP53 (By similarity). Interacts with DUS2L (via DRBM domain) (By similarity).</text>
</comment>
<comment type="subcellular location">
    <subcellularLocation>
        <location evidence="1">Cytoplasm</location>
        <location evidence="1">Perinuclear region</location>
    </subcellularLocation>
    <subcellularLocation>
        <location evidence="1">Cytoplasm</location>
    </subcellularLocation>
</comment>
<comment type="domain">
    <text evidence="1">Self-association may occur via interactions between DRBM domains as follows: DRBM 1/DRBM 1, DRBM 1/DRBM 2, DRBM 2/DRBM 2 or DRBM 3/DRBM3.</text>
</comment>
<comment type="PTM">
    <text evidence="1">Phosphorylated at Ser-246 in unstressed cells and at Ser-287 in stressed cells. Phosphorylation at Ser-246 appears to be a prerequisite for subsequent phosphorylation at Ser-287. Phosphorylation at Ser-246 and Ser-287 are necessary for activation of EIF2AK2/PKR under conditions of stress (By similarity).</text>
</comment>
<comment type="similarity">
    <text evidence="5">Belongs to the PRKRA family.</text>
</comment>
<feature type="chain" id="PRO_0000379455" description="Interferon-inducible double-stranded RNA-dependent protein kinase activator A">
    <location>
        <begin position="1"/>
        <end position="313"/>
    </location>
</feature>
<feature type="domain" description="DRBM 1" evidence="3">
    <location>
        <begin position="34"/>
        <end position="101"/>
    </location>
</feature>
<feature type="domain" description="DRBM 2" evidence="3">
    <location>
        <begin position="126"/>
        <end position="194"/>
    </location>
</feature>
<feature type="domain" description="DRBM 3" evidence="3">
    <location>
        <begin position="240"/>
        <end position="308"/>
    </location>
</feature>
<feature type="region of interest" description="Sufficient for self-association and interaction with TARBP2" evidence="1">
    <location>
        <begin position="1"/>
        <end position="103"/>
    </location>
</feature>
<feature type="region of interest" description="Disordered" evidence="4">
    <location>
        <begin position="1"/>
        <end position="21"/>
    </location>
</feature>
<feature type="region of interest" description="Sufficient for self-association and interaction with TARBP2" evidence="1">
    <location>
        <begin position="102"/>
        <end position="195"/>
    </location>
</feature>
<feature type="region of interest" description="Sufficient for self-association and interaction with TARBP2" evidence="1">
    <location>
        <begin position="195"/>
        <end position="313"/>
    </location>
</feature>
<feature type="modified residue" description="Phosphoserine" evidence="2">
    <location>
        <position position="18"/>
    </location>
</feature>
<feature type="modified residue" description="Phosphoserine" evidence="2">
    <location>
        <position position="167"/>
    </location>
</feature>
<feature type="modified residue" description="Phosphoserine" evidence="2">
    <location>
        <position position="246"/>
    </location>
</feature>
<feature type="modified residue" description="Phosphoserine" evidence="2">
    <location>
        <position position="287"/>
    </location>
</feature>
<proteinExistence type="evidence at transcript level"/>